<reference key="1">
    <citation type="journal article" date="2000" name="Nature">
        <title>The genome sequence of the plant pathogen Xylella fastidiosa.</title>
        <authorList>
            <person name="Simpson A.J.G."/>
            <person name="Reinach F.C."/>
            <person name="Arruda P."/>
            <person name="Abreu F.A."/>
            <person name="Acencio M."/>
            <person name="Alvarenga R."/>
            <person name="Alves L.M.C."/>
            <person name="Araya J.E."/>
            <person name="Baia G.S."/>
            <person name="Baptista C.S."/>
            <person name="Barros M.H."/>
            <person name="Bonaccorsi E.D."/>
            <person name="Bordin S."/>
            <person name="Bove J.M."/>
            <person name="Briones M.R.S."/>
            <person name="Bueno M.R.P."/>
            <person name="Camargo A.A."/>
            <person name="Camargo L.E.A."/>
            <person name="Carraro D.M."/>
            <person name="Carrer H."/>
            <person name="Colauto N.B."/>
            <person name="Colombo C."/>
            <person name="Costa F.F."/>
            <person name="Costa M.C.R."/>
            <person name="Costa-Neto C.M."/>
            <person name="Coutinho L.L."/>
            <person name="Cristofani M."/>
            <person name="Dias-Neto E."/>
            <person name="Docena C."/>
            <person name="El-Dorry H."/>
            <person name="Facincani A.P."/>
            <person name="Ferreira A.J.S."/>
            <person name="Ferreira V.C.A."/>
            <person name="Ferro J.A."/>
            <person name="Fraga J.S."/>
            <person name="Franca S.C."/>
            <person name="Franco M.C."/>
            <person name="Frohme M."/>
            <person name="Furlan L.R."/>
            <person name="Garnier M."/>
            <person name="Goldman G.H."/>
            <person name="Goldman M.H.S."/>
            <person name="Gomes S.L."/>
            <person name="Gruber A."/>
            <person name="Ho P.L."/>
            <person name="Hoheisel J.D."/>
            <person name="Junqueira M.L."/>
            <person name="Kemper E.L."/>
            <person name="Kitajima J.P."/>
            <person name="Krieger J.E."/>
            <person name="Kuramae E.E."/>
            <person name="Laigret F."/>
            <person name="Lambais M.R."/>
            <person name="Leite L.C.C."/>
            <person name="Lemos E.G.M."/>
            <person name="Lemos M.V.F."/>
            <person name="Lopes S.A."/>
            <person name="Lopes C.R."/>
            <person name="Machado J.A."/>
            <person name="Machado M.A."/>
            <person name="Madeira A.M.B.N."/>
            <person name="Madeira H.M.F."/>
            <person name="Marino C.L."/>
            <person name="Marques M.V."/>
            <person name="Martins E.A.L."/>
            <person name="Martins E.M.F."/>
            <person name="Matsukuma A.Y."/>
            <person name="Menck C.F.M."/>
            <person name="Miracca E.C."/>
            <person name="Miyaki C.Y."/>
            <person name="Monteiro-Vitorello C.B."/>
            <person name="Moon D.H."/>
            <person name="Nagai M.A."/>
            <person name="Nascimento A.L.T.O."/>
            <person name="Netto L.E.S."/>
            <person name="Nhani A. Jr."/>
            <person name="Nobrega F.G."/>
            <person name="Nunes L.R."/>
            <person name="Oliveira M.A."/>
            <person name="de Oliveira M.C."/>
            <person name="de Oliveira R.C."/>
            <person name="Palmieri D.A."/>
            <person name="Paris A."/>
            <person name="Peixoto B.R."/>
            <person name="Pereira G.A.G."/>
            <person name="Pereira H.A. Jr."/>
            <person name="Pesquero J.B."/>
            <person name="Quaggio R.B."/>
            <person name="Roberto P.G."/>
            <person name="Rodrigues V."/>
            <person name="de Rosa A.J.M."/>
            <person name="de Rosa V.E. Jr."/>
            <person name="de Sa R.G."/>
            <person name="Santelli R.V."/>
            <person name="Sawasaki H.E."/>
            <person name="da Silva A.C.R."/>
            <person name="da Silva A.M."/>
            <person name="da Silva F.R."/>
            <person name="Silva W.A. Jr."/>
            <person name="da Silveira J.F."/>
            <person name="Silvestri M.L.Z."/>
            <person name="Siqueira W.J."/>
            <person name="de Souza A.A."/>
            <person name="de Souza A.P."/>
            <person name="Terenzi M.F."/>
            <person name="Truffi D."/>
            <person name="Tsai S.M."/>
            <person name="Tsuhako M.H."/>
            <person name="Vallada H."/>
            <person name="Van Sluys M.A."/>
            <person name="Verjovski-Almeida S."/>
            <person name="Vettore A.L."/>
            <person name="Zago M.A."/>
            <person name="Zatz M."/>
            <person name="Meidanis J."/>
            <person name="Setubal J.C."/>
        </authorList>
    </citation>
    <scope>NUCLEOTIDE SEQUENCE [LARGE SCALE GENOMIC DNA]</scope>
    <source>
        <strain>9a5c</strain>
    </source>
</reference>
<evidence type="ECO:0000255" key="1">
    <source>
        <dbReference type="HAMAP-Rule" id="MF_01139"/>
    </source>
</evidence>
<sequence>MQINTIPVNPTLPRHIAIIMDGNGRWAERRSRPRTTGHRAGVKAAMRTVDFCLEKGIKMLTLFAFSSENWNRPADEVNFLMEMSIKLFGRGIEELHRRGVQVRFIGERKRFDIALVEHMTKAEHLTANNQRLILSLAVSYGGRQDITMAARALAQDVAAGRLKPEQIDEDLLGQHMALADLPPPDMFIRTSGVIRISNFLLWQIAYTELWFTDVMWPEFNSTVLQQALDDYASRERRFGLTNAQIASRGKGSIPA</sequence>
<feature type="chain" id="PRO_0000123721" description="Ditrans,polycis-undecaprenyl-diphosphate synthase ((2E,6E)-farnesyl-diphosphate specific)">
    <location>
        <begin position="1"/>
        <end position="255"/>
    </location>
</feature>
<feature type="active site" evidence="1">
    <location>
        <position position="21"/>
    </location>
</feature>
<feature type="active site" description="Proton acceptor" evidence="1">
    <location>
        <position position="69"/>
    </location>
</feature>
<feature type="binding site" evidence="1">
    <location>
        <position position="21"/>
    </location>
    <ligand>
        <name>Mg(2+)</name>
        <dbReference type="ChEBI" id="CHEBI:18420"/>
    </ligand>
</feature>
<feature type="binding site" evidence="1">
    <location>
        <begin position="22"/>
        <end position="25"/>
    </location>
    <ligand>
        <name>substrate</name>
    </ligand>
</feature>
<feature type="binding site" evidence="1">
    <location>
        <position position="26"/>
    </location>
    <ligand>
        <name>substrate</name>
    </ligand>
</feature>
<feature type="binding site" evidence="1">
    <location>
        <position position="34"/>
    </location>
    <ligand>
        <name>substrate</name>
    </ligand>
</feature>
<feature type="binding site" evidence="1">
    <location>
        <position position="38"/>
    </location>
    <ligand>
        <name>substrate</name>
    </ligand>
</feature>
<feature type="binding site" evidence="1">
    <location>
        <begin position="66"/>
        <end position="68"/>
    </location>
    <ligand>
        <name>substrate</name>
    </ligand>
</feature>
<feature type="binding site" evidence="1">
    <location>
        <position position="70"/>
    </location>
    <ligand>
        <name>substrate</name>
    </ligand>
</feature>
<feature type="binding site" evidence="1">
    <location>
        <position position="72"/>
    </location>
    <ligand>
        <name>substrate</name>
    </ligand>
</feature>
<feature type="binding site" evidence="1">
    <location>
        <position position="189"/>
    </location>
    <ligand>
        <name>substrate</name>
    </ligand>
</feature>
<feature type="binding site" evidence="1">
    <location>
        <begin position="195"/>
        <end position="197"/>
    </location>
    <ligand>
        <name>substrate</name>
    </ligand>
</feature>
<feature type="binding site" evidence="1">
    <location>
        <position position="208"/>
    </location>
    <ligand>
        <name>Mg(2+)</name>
        <dbReference type="ChEBI" id="CHEBI:18420"/>
    </ligand>
</feature>
<name>UPPS_XYLFA</name>
<keyword id="KW-0133">Cell shape</keyword>
<keyword id="KW-0961">Cell wall biogenesis/degradation</keyword>
<keyword id="KW-0460">Magnesium</keyword>
<keyword id="KW-0479">Metal-binding</keyword>
<keyword id="KW-0573">Peptidoglycan synthesis</keyword>
<keyword id="KW-0808">Transferase</keyword>
<proteinExistence type="inferred from homology"/>
<comment type="function">
    <text evidence="1">Catalyzes the sequential condensation of isopentenyl diphosphate (IPP) with (2E,6E)-farnesyl diphosphate (E,E-FPP) to yield (2Z,6Z,10Z,14Z,18Z,22Z,26Z,30Z,34E,38E)-undecaprenyl diphosphate (di-trans,octa-cis-UPP). UPP is the precursor of glycosyl carrier lipid in the biosynthesis of bacterial cell wall polysaccharide components such as peptidoglycan and lipopolysaccharide.</text>
</comment>
<comment type="catalytic activity">
    <reaction evidence="1">
        <text>8 isopentenyl diphosphate + (2E,6E)-farnesyl diphosphate = di-trans,octa-cis-undecaprenyl diphosphate + 8 diphosphate</text>
        <dbReference type="Rhea" id="RHEA:27551"/>
        <dbReference type="ChEBI" id="CHEBI:33019"/>
        <dbReference type="ChEBI" id="CHEBI:58405"/>
        <dbReference type="ChEBI" id="CHEBI:128769"/>
        <dbReference type="ChEBI" id="CHEBI:175763"/>
        <dbReference type="EC" id="2.5.1.31"/>
    </reaction>
</comment>
<comment type="cofactor">
    <cofactor evidence="1">
        <name>Mg(2+)</name>
        <dbReference type="ChEBI" id="CHEBI:18420"/>
    </cofactor>
    <text evidence="1">Binds 2 magnesium ions per subunit.</text>
</comment>
<comment type="subunit">
    <text evidence="1">Homodimer.</text>
</comment>
<comment type="similarity">
    <text evidence="1">Belongs to the UPP synthase family.</text>
</comment>
<accession>Q9PEH8</accession>
<dbReference type="EC" id="2.5.1.31" evidence="1"/>
<dbReference type="EMBL" id="AE003849">
    <property type="protein sequence ID" value="AAF83860.1"/>
    <property type="molecule type" value="Genomic_DNA"/>
</dbReference>
<dbReference type="PIR" id="B82729">
    <property type="entry name" value="B82729"/>
</dbReference>
<dbReference type="RefSeq" id="WP_010893569.1">
    <property type="nucleotide sequence ID" value="NC_002488.3"/>
</dbReference>
<dbReference type="SMR" id="Q9PEH8"/>
<dbReference type="STRING" id="160492.XF_1050"/>
<dbReference type="KEGG" id="xfa:XF_1050"/>
<dbReference type="eggNOG" id="COG0020">
    <property type="taxonomic scope" value="Bacteria"/>
</dbReference>
<dbReference type="HOGENOM" id="CLU_038505_1_1_6"/>
<dbReference type="Proteomes" id="UP000000812">
    <property type="component" value="Chromosome"/>
</dbReference>
<dbReference type="GO" id="GO:0005829">
    <property type="term" value="C:cytosol"/>
    <property type="evidence" value="ECO:0007669"/>
    <property type="project" value="TreeGrafter"/>
</dbReference>
<dbReference type="GO" id="GO:0008834">
    <property type="term" value="F:ditrans,polycis-undecaprenyl-diphosphate synthase [(2E,6E)-farnesyl-diphosphate specific] activity"/>
    <property type="evidence" value="ECO:0007669"/>
    <property type="project" value="UniProtKB-UniRule"/>
</dbReference>
<dbReference type="GO" id="GO:0000287">
    <property type="term" value="F:magnesium ion binding"/>
    <property type="evidence" value="ECO:0007669"/>
    <property type="project" value="UniProtKB-UniRule"/>
</dbReference>
<dbReference type="GO" id="GO:0071555">
    <property type="term" value="P:cell wall organization"/>
    <property type="evidence" value="ECO:0007669"/>
    <property type="project" value="UniProtKB-KW"/>
</dbReference>
<dbReference type="GO" id="GO:0009252">
    <property type="term" value="P:peptidoglycan biosynthetic process"/>
    <property type="evidence" value="ECO:0007669"/>
    <property type="project" value="UniProtKB-UniRule"/>
</dbReference>
<dbReference type="GO" id="GO:0016094">
    <property type="term" value="P:polyprenol biosynthetic process"/>
    <property type="evidence" value="ECO:0007669"/>
    <property type="project" value="TreeGrafter"/>
</dbReference>
<dbReference type="GO" id="GO:0008360">
    <property type="term" value="P:regulation of cell shape"/>
    <property type="evidence" value="ECO:0007669"/>
    <property type="project" value="UniProtKB-KW"/>
</dbReference>
<dbReference type="CDD" id="cd00475">
    <property type="entry name" value="Cis_IPPS"/>
    <property type="match status" value="1"/>
</dbReference>
<dbReference type="FunFam" id="3.40.1180.10:FF:000001">
    <property type="entry name" value="(2E,6E)-farnesyl-diphosphate-specific ditrans,polycis-undecaprenyl-diphosphate synthase"/>
    <property type="match status" value="1"/>
</dbReference>
<dbReference type="Gene3D" id="3.40.1180.10">
    <property type="entry name" value="Decaprenyl diphosphate synthase-like"/>
    <property type="match status" value="1"/>
</dbReference>
<dbReference type="HAMAP" id="MF_01139">
    <property type="entry name" value="ISPT"/>
    <property type="match status" value="1"/>
</dbReference>
<dbReference type="InterPro" id="IPR001441">
    <property type="entry name" value="UPP_synth-like"/>
</dbReference>
<dbReference type="InterPro" id="IPR018520">
    <property type="entry name" value="UPP_synth-like_CS"/>
</dbReference>
<dbReference type="InterPro" id="IPR036424">
    <property type="entry name" value="UPP_synth-like_sf"/>
</dbReference>
<dbReference type="NCBIfam" id="TIGR00055">
    <property type="entry name" value="uppS"/>
    <property type="match status" value="1"/>
</dbReference>
<dbReference type="PANTHER" id="PTHR10291:SF0">
    <property type="entry name" value="DEHYDRODOLICHYL DIPHOSPHATE SYNTHASE 2"/>
    <property type="match status" value="1"/>
</dbReference>
<dbReference type="PANTHER" id="PTHR10291">
    <property type="entry name" value="DEHYDRODOLICHYL DIPHOSPHATE SYNTHASE FAMILY MEMBER"/>
    <property type="match status" value="1"/>
</dbReference>
<dbReference type="Pfam" id="PF01255">
    <property type="entry name" value="Prenyltransf"/>
    <property type="match status" value="1"/>
</dbReference>
<dbReference type="SUPFAM" id="SSF64005">
    <property type="entry name" value="Undecaprenyl diphosphate synthase"/>
    <property type="match status" value="1"/>
</dbReference>
<dbReference type="PROSITE" id="PS01066">
    <property type="entry name" value="UPP_SYNTHASE"/>
    <property type="match status" value="1"/>
</dbReference>
<organism>
    <name type="scientific">Xylella fastidiosa (strain 9a5c)</name>
    <dbReference type="NCBI Taxonomy" id="160492"/>
    <lineage>
        <taxon>Bacteria</taxon>
        <taxon>Pseudomonadati</taxon>
        <taxon>Pseudomonadota</taxon>
        <taxon>Gammaproteobacteria</taxon>
        <taxon>Lysobacterales</taxon>
        <taxon>Lysobacteraceae</taxon>
        <taxon>Xylella</taxon>
    </lineage>
</organism>
<protein>
    <recommendedName>
        <fullName evidence="1">Ditrans,polycis-undecaprenyl-diphosphate synthase ((2E,6E)-farnesyl-diphosphate specific)</fullName>
        <ecNumber evidence="1">2.5.1.31</ecNumber>
    </recommendedName>
    <alternativeName>
        <fullName evidence="1">Ditrans,polycis-undecaprenylcistransferase</fullName>
    </alternativeName>
    <alternativeName>
        <fullName evidence="1">Undecaprenyl diphosphate synthase</fullName>
        <shortName evidence="1">UDS</shortName>
    </alternativeName>
    <alternativeName>
        <fullName evidence="1">Undecaprenyl pyrophosphate synthase</fullName>
        <shortName evidence="1">UPP synthase</shortName>
    </alternativeName>
</protein>
<gene>
    <name evidence="1" type="primary">uppS</name>
    <name type="ordered locus">XF_1050</name>
</gene>